<accession>Q5M948</accession>
<evidence type="ECO:0000250" key="1"/>
<evidence type="ECO:0000250" key="2">
    <source>
        <dbReference type="UniProtKB" id="Q9H5J8"/>
    </source>
</evidence>
<evidence type="ECO:0000256" key="3">
    <source>
        <dbReference type="SAM" id="MobiDB-lite"/>
    </source>
</evidence>
<organism>
    <name type="scientific">Rattus norvegicus</name>
    <name type="common">Rat</name>
    <dbReference type="NCBI Taxonomy" id="10116"/>
    <lineage>
        <taxon>Eukaryota</taxon>
        <taxon>Metazoa</taxon>
        <taxon>Chordata</taxon>
        <taxon>Craniata</taxon>
        <taxon>Vertebrata</taxon>
        <taxon>Euteleostomi</taxon>
        <taxon>Mammalia</taxon>
        <taxon>Eutheria</taxon>
        <taxon>Euarchontoglires</taxon>
        <taxon>Glires</taxon>
        <taxon>Rodentia</taxon>
        <taxon>Myomorpha</taxon>
        <taxon>Muroidea</taxon>
        <taxon>Muridae</taxon>
        <taxon>Murinae</taxon>
        <taxon>Rattus</taxon>
    </lineage>
</organism>
<keyword id="KW-0238">DNA-binding</keyword>
<keyword id="KW-0539">Nucleus</keyword>
<keyword id="KW-0597">Phosphoprotein</keyword>
<keyword id="KW-1185">Reference proteome</keyword>
<keyword id="KW-0804">Transcription</keyword>
<keyword id="KW-0805">Transcription regulation</keyword>
<gene>
    <name type="primary">Taf1d</name>
    <name type="synonym">Josd3</name>
</gene>
<sequence>MAQSEVDSVDCVTSDRDGDIGNQSDDSSNSSLFKTQCVPSPTRKQRIPTVKCVPSLASVETDSSSDSSLEPRPLTLKAIFERFKKKKRKKRKKRKYKPKLRRQGRPSGTRNIRRSQIDAKQIKDKGAVFPFLESESGRKTLPWKKILTYEQAVARGFFHHIEKLKYEHHLKECLSQMHAGEDLEKEDFDSRRHKYMDDDGPLSPIEEPSTEDEATDPQSECDIKLVEDSCFIISTEFPRKRNLEQGKIKKESAFSKKSKAKDATQRGNRRSWKGGEHACLHSEVS</sequence>
<proteinExistence type="evidence at transcript level"/>
<feature type="chain" id="PRO_0000250720" description="TATA box-binding protein-associated factor RNA polymerase I subunit D">
    <location>
        <begin position="1"/>
        <end position="285"/>
    </location>
</feature>
<feature type="region of interest" description="Disordered" evidence="3">
    <location>
        <begin position="1"/>
        <end position="49"/>
    </location>
</feature>
<feature type="region of interest" description="Disordered" evidence="3">
    <location>
        <begin position="85"/>
        <end position="112"/>
    </location>
</feature>
<feature type="region of interest" description="Disordered" evidence="3">
    <location>
        <begin position="193"/>
        <end position="219"/>
    </location>
</feature>
<feature type="region of interest" description="Disordered" evidence="3">
    <location>
        <begin position="242"/>
        <end position="285"/>
    </location>
</feature>
<feature type="compositionally biased region" description="Polar residues" evidence="3">
    <location>
        <begin position="21"/>
        <end position="39"/>
    </location>
</feature>
<feature type="compositionally biased region" description="Basic residues" evidence="3">
    <location>
        <begin position="85"/>
        <end position="104"/>
    </location>
</feature>
<feature type="compositionally biased region" description="Basic and acidic residues" evidence="3">
    <location>
        <begin position="242"/>
        <end position="264"/>
    </location>
</feature>
<feature type="compositionally biased region" description="Basic and acidic residues" evidence="3">
    <location>
        <begin position="273"/>
        <end position="285"/>
    </location>
</feature>
<feature type="modified residue" description="Phosphoserine" evidence="2">
    <location>
        <position position="24"/>
    </location>
</feature>
<feature type="modified residue" description="Phosphoserine" evidence="2">
    <location>
        <position position="134"/>
    </location>
</feature>
<feature type="modified residue" description="Phosphoserine" evidence="2">
    <location>
        <position position="229"/>
    </location>
</feature>
<dbReference type="EMBL" id="BC087647">
    <property type="protein sequence ID" value="AAH87647.1"/>
    <property type="molecule type" value="mRNA"/>
</dbReference>
<dbReference type="RefSeq" id="NP_001014229.1">
    <property type="nucleotide sequence ID" value="NM_001014207.1"/>
</dbReference>
<dbReference type="SMR" id="Q5M948"/>
<dbReference type="FunCoup" id="Q5M948">
    <property type="interactions" value="1133"/>
</dbReference>
<dbReference type="STRING" id="10116.ENSRNOP00000068730"/>
<dbReference type="PhosphoSitePlus" id="Q5M948"/>
<dbReference type="PaxDb" id="10116-ENSRNOP00000014605"/>
<dbReference type="UCSC" id="RGD:1309627">
    <property type="organism name" value="rat"/>
</dbReference>
<dbReference type="AGR" id="RGD:1309627"/>
<dbReference type="RGD" id="1309627">
    <property type="gene designation" value="Taf1d"/>
</dbReference>
<dbReference type="eggNOG" id="ENOG502SQMW">
    <property type="taxonomic scope" value="Eukaryota"/>
</dbReference>
<dbReference type="InParanoid" id="Q5M948"/>
<dbReference type="PhylomeDB" id="Q5M948"/>
<dbReference type="Reactome" id="R-RNO-5250924">
    <property type="pathway name" value="B-WICH complex positively regulates rRNA expression"/>
</dbReference>
<dbReference type="Reactome" id="R-RNO-73762">
    <property type="pathway name" value="RNA Polymerase I Transcription Initiation"/>
</dbReference>
<dbReference type="Reactome" id="R-RNO-73772">
    <property type="pathway name" value="RNA Polymerase I Promoter Escape"/>
</dbReference>
<dbReference type="Reactome" id="R-RNO-73863">
    <property type="pathway name" value="RNA Polymerase I Transcription Termination"/>
</dbReference>
<dbReference type="PRO" id="PR:Q5M948"/>
<dbReference type="Proteomes" id="UP000002494">
    <property type="component" value="Unplaced"/>
</dbReference>
<dbReference type="GO" id="GO:0005654">
    <property type="term" value="C:nucleoplasm"/>
    <property type="evidence" value="ECO:0000318"/>
    <property type="project" value="GO_Central"/>
</dbReference>
<dbReference type="GO" id="GO:0005668">
    <property type="term" value="C:RNA polymerase transcription factor SL1 complex"/>
    <property type="evidence" value="ECO:0007669"/>
    <property type="project" value="InterPro"/>
</dbReference>
<dbReference type="GO" id="GO:0003677">
    <property type="term" value="F:DNA binding"/>
    <property type="evidence" value="ECO:0007669"/>
    <property type="project" value="UniProtKB-KW"/>
</dbReference>
<dbReference type="GO" id="GO:0042802">
    <property type="term" value="F:identical protein binding"/>
    <property type="evidence" value="ECO:0000266"/>
    <property type="project" value="RGD"/>
</dbReference>
<dbReference type="GO" id="GO:0006355">
    <property type="term" value="P:regulation of DNA-templated transcription"/>
    <property type="evidence" value="ECO:0007669"/>
    <property type="project" value="InterPro"/>
</dbReference>
<dbReference type="InterPro" id="IPR027976">
    <property type="entry name" value="TAF1D"/>
</dbReference>
<dbReference type="PANTHER" id="PTHR14562">
    <property type="entry name" value="TATA BOX-BINDING PROTEIN ASSOCIATED FACTOR RNA POLYMERASE I SUBUNIT D"/>
    <property type="match status" value="1"/>
</dbReference>
<dbReference type="PANTHER" id="PTHR14562:SF3">
    <property type="entry name" value="TATA BOX-BINDING PROTEIN-ASSOCIATED FACTOR RNA POLYMERASE I SUBUNIT D"/>
    <property type="match status" value="1"/>
</dbReference>
<dbReference type="Pfam" id="PF15333">
    <property type="entry name" value="TAF1D"/>
    <property type="match status" value="1"/>
</dbReference>
<protein>
    <recommendedName>
        <fullName>TATA box-binding protein-associated factor RNA polymerase I subunit D</fullName>
    </recommendedName>
    <alternativeName>
        <fullName>TATA box-binding protein-associated factor 1D</fullName>
        <shortName>TBP-associated factor 1D</shortName>
    </alternativeName>
    <alternativeName>
        <fullName>Transcription initiation factor SL1/TIF-IB subunit D</fullName>
    </alternativeName>
</protein>
<comment type="function">
    <text evidence="1">Component of the transcription factor SL1/TIF-IB complex, which is involved in the assembly of the PIC (preinitiation complex) during RNA polymerase I-dependent transcription. The rate of PIC formation probably is primarily dependent on the rate of association of SL1/TIF-IB with the rDNA promoter. SL1/TIF-IB is involved in stabilization of nucleolar transcription factor 1/UBTF on rDNA. Formation of SL1/TIF-IB excludes the association of TBP with TFIID subunits (By similarity).</text>
</comment>
<comment type="subunit">
    <text evidence="1">Component of the transcription factor SL1/TIF-IB complex, composed of TBP and at least TAF1A, TAF1B, TAF1C and TAF1D. Interacts with UBTF (By similarity).</text>
</comment>
<comment type="subcellular location">
    <subcellularLocation>
        <location evidence="1">Nucleus</location>
    </subcellularLocation>
</comment>
<name>TAF1D_RAT</name>
<reference key="1">
    <citation type="journal article" date="2004" name="Genome Res.">
        <title>The status, quality, and expansion of the NIH full-length cDNA project: the Mammalian Gene Collection (MGC).</title>
        <authorList>
            <consortium name="The MGC Project Team"/>
        </authorList>
    </citation>
    <scope>NUCLEOTIDE SEQUENCE [LARGE SCALE MRNA]</scope>
    <source>
        <tissue>Ovary</tissue>
    </source>
</reference>